<evidence type="ECO:0000255" key="1">
    <source>
        <dbReference type="HAMAP-Rule" id="MF_00083"/>
    </source>
</evidence>
<evidence type="ECO:0000269" key="2">
    <source>
    </source>
</evidence>
<evidence type="ECO:0000269" key="3">
    <source>
    </source>
</evidence>
<evidence type="ECO:0000305" key="4">
    <source>
    </source>
</evidence>
<evidence type="ECO:0007744" key="5">
    <source>
        <dbReference type="PDB" id="4FYJ"/>
    </source>
</evidence>
<evidence type="ECO:0007744" key="6">
    <source>
        <dbReference type="PDB" id="4QAJ"/>
    </source>
</evidence>
<evidence type="ECO:0007744" key="7">
    <source>
        <dbReference type="PDB" id="4QBK"/>
    </source>
</evidence>
<evidence type="ECO:0007744" key="8">
    <source>
        <dbReference type="PDB" id="4QD3"/>
    </source>
</evidence>
<evidence type="ECO:0007829" key="9">
    <source>
        <dbReference type="PDB" id="4FYJ"/>
    </source>
</evidence>
<evidence type="ECO:0007829" key="10">
    <source>
        <dbReference type="PDB" id="4QAJ"/>
    </source>
</evidence>
<keyword id="KW-0002">3D-structure</keyword>
<keyword id="KW-0963">Cytoplasm</keyword>
<keyword id="KW-0378">Hydrolase</keyword>
<keyword id="KW-1185">Reference proteome</keyword>
<keyword id="KW-0694">RNA-binding</keyword>
<keyword id="KW-0820">tRNA-binding</keyword>
<reference key="1">
    <citation type="journal article" date="2000" name="Nature">
        <title>Complete genome sequence of Pseudomonas aeruginosa PAO1, an opportunistic pathogen.</title>
        <authorList>
            <person name="Stover C.K."/>
            <person name="Pham X.-Q.T."/>
            <person name="Erwin A.L."/>
            <person name="Mizoguchi S.D."/>
            <person name="Warrener P."/>
            <person name="Hickey M.J."/>
            <person name="Brinkman F.S.L."/>
            <person name="Hufnagle W.O."/>
            <person name="Kowalik D.J."/>
            <person name="Lagrou M."/>
            <person name="Garber R.L."/>
            <person name="Goltry L."/>
            <person name="Tolentino E."/>
            <person name="Westbrock-Wadman S."/>
            <person name="Yuan Y."/>
            <person name="Brody L.L."/>
            <person name="Coulter S.N."/>
            <person name="Folger K.R."/>
            <person name="Kas A."/>
            <person name="Larbig K."/>
            <person name="Lim R.M."/>
            <person name="Smith K.A."/>
            <person name="Spencer D.H."/>
            <person name="Wong G.K.-S."/>
            <person name="Wu Z."/>
            <person name="Paulsen I.T."/>
            <person name="Reizer J."/>
            <person name="Saier M.H. Jr."/>
            <person name="Hancock R.E.W."/>
            <person name="Lory S."/>
            <person name="Olson M.V."/>
        </authorList>
    </citation>
    <scope>NUCLEOTIDE SEQUENCE [LARGE SCALE GENOMIC DNA]</scope>
    <source>
        <strain>ATCC 15692 / DSM 22644 / CIP 104116 / JCM 14847 / LMG 12228 / 1C / PRS 101 / PAO1</strain>
    </source>
</reference>
<reference evidence="5" key="2">
    <citation type="journal article" date="2012" name="Acta Crystallogr. F">
        <title>Recombinant production, crystallization and X-ray crystallographic structure determination of the peptidyl-tRNA hydrolase of Pseudomonas aeruginosa.</title>
        <authorList>
            <person name="Hughes R.C."/>
            <person name="McFeeters H."/>
            <person name="Coates L."/>
            <person name="McFeeters R.L."/>
        </authorList>
    </citation>
    <scope>X-RAY CRYSTALLOGRAPHY (1.77 ANGSTROMS) OF 1-193</scope>
    <scope>FUNCTION</scope>
    <scope>SUBUNIT</scope>
</reference>
<reference evidence="6 7 8" key="3">
    <citation type="journal article" date="2014" name="Biochem. J.">
        <title>Structural and binding studies of peptidyl-tRNA hydrolase from Pseudomonas aeruginosa provide a platform for the structure-based inhibitor design against peptidyl-tRNA hydrolase.</title>
        <authorList>
            <person name="Singh A."/>
            <person name="Kumar A."/>
            <person name="Gautam L."/>
            <person name="Sharma P."/>
            <person name="Sinha M."/>
            <person name="Bhushan A."/>
            <person name="Kaur P."/>
            <person name="Sharma S."/>
            <person name="Arora A."/>
            <person name="Singh T.P."/>
        </authorList>
    </citation>
    <scope>X-RAY CRYSTALLOGRAPHY (1.50 ANGSTROMS)</scope>
    <scope>X-RAY CRYSTALLOGRAPHY (1.77 ANGSTROMS) WITH AMINOACYL-TRNA ANALOG</scope>
    <scope>SUBUNIT</scope>
    <scope>TRNA-BINDING</scope>
    <source>
        <strain>MTCC 4673</strain>
    </source>
</reference>
<accession>Q9HVC3</accession>
<comment type="function">
    <text evidence="1 2">Hydrolyzes ribosome-free peptidyl-tRNAs (with 1 or more amino acids incorporated), which drop off the ribosome during protein synthesis, or as a result of ribosome stalling.</text>
</comment>
<comment type="function">
    <text evidence="1">Catalyzes the release of premature peptidyl moieties from peptidyl-tRNA molecules trapped in stalled 50S ribosomal subunits, and thus maintains levels of free tRNAs and 50S ribosomes.</text>
</comment>
<comment type="catalytic activity">
    <reaction evidence="1">
        <text>an N-acyl-L-alpha-aminoacyl-tRNA + H2O = an N-acyl-L-amino acid + a tRNA + H(+)</text>
        <dbReference type="Rhea" id="RHEA:54448"/>
        <dbReference type="Rhea" id="RHEA-COMP:10123"/>
        <dbReference type="Rhea" id="RHEA-COMP:13883"/>
        <dbReference type="ChEBI" id="CHEBI:15377"/>
        <dbReference type="ChEBI" id="CHEBI:15378"/>
        <dbReference type="ChEBI" id="CHEBI:59874"/>
        <dbReference type="ChEBI" id="CHEBI:78442"/>
        <dbReference type="ChEBI" id="CHEBI:138191"/>
        <dbReference type="EC" id="3.1.1.29"/>
    </reaction>
</comment>
<comment type="subunit">
    <text evidence="1 2 3">Monomer.</text>
</comment>
<comment type="subcellular location">
    <subcellularLocation>
        <location evidence="1">Cytoplasm</location>
    </subcellularLocation>
</comment>
<comment type="similarity">
    <text evidence="1">Belongs to the PTH family.</text>
</comment>
<name>PTH_PSEAE</name>
<organism>
    <name type="scientific">Pseudomonas aeruginosa (strain ATCC 15692 / DSM 22644 / CIP 104116 / JCM 14847 / LMG 12228 / 1C / PRS 101 / PAO1)</name>
    <dbReference type="NCBI Taxonomy" id="208964"/>
    <lineage>
        <taxon>Bacteria</taxon>
        <taxon>Pseudomonadati</taxon>
        <taxon>Pseudomonadota</taxon>
        <taxon>Gammaproteobacteria</taxon>
        <taxon>Pseudomonadales</taxon>
        <taxon>Pseudomonadaceae</taxon>
        <taxon>Pseudomonas</taxon>
    </lineage>
</organism>
<dbReference type="EC" id="3.1.1.29" evidence="1"/>
<dbReference type="EMBL" id="AE004091">
    <property type="protein sequence ID" value="AAG08059.1"/>
    <property type="molecule type" value="Genomic_DNA"/>
</dbReference>
<dbReference type="PIR" id="H83060">
    <property type="entry name" value="H83060"/>
</dbReference>
<dbReference type="RefSeq" id="NP_253361.1">
    <property type="nucleotide sequence ID" value="NC_002516.2"/>
</dbReference>
<dbReference type="RefSeq" id="WP_003099278.1">
    <property type="nucleotide sequence ID" value="NZ_QZGE01000029.1"/>
</dbReference>
<dbReference type="PDB" id="4DHW">
    <property type="method" value="X-ray"/>
    <property type="resolution" value="2.43 A"/>
    <property type="chains" value="A/B=1-194"/>
</dbReference>
<dbReference type="PDB" id="4DJJ">
    <property type="method" value="X-ray"/>
    <property type="resolution" value="2.94 A"/>
    <property type="chains" value="A/B=1-194"/>
</dbReference>
<dbReference type="PDB" id="4ERX">
    <property type="method" value="X-ray"/>
    <property type="resolution" value="2.50 A"/>
    <property type="chains" value="A/B=1-194"/>
</dbReference>
<dbReference type="PDB" id="4FNO">
    <property type="method" value="X-ray"/>
    <property type="resolution" value="2.25 A"/>
    <property type="chains" value="A/B=1-194"/>
</dbReference>
<dbReference type="PDB" id="4FYJ">
    <property type="method" value="X-ray"/>
    <property type="resolution" value="1.77 A"/>
    <property type="chains" value="A=2-193"/>
</dbReference>
<dbReference type="PDB" id="4JC4">
    <property type="method" value="X-ray"/>
    <property type="resolution" value="2.25 A"/>
    <property type="chains" value="A=1-194"/>
</dbReference>
<dbReference type="PDB" id="4QAJ">
    <property type="method" value="X-ray"/>
    <property type="resolution" value="1.50 A"/>
    <property type="chains" value="A=1-194"/>
</dbReference>
<dbReference type="PDB" id="4QBK">
    <property type="method" value="X-ray"/>
    <property type="resolution" value="1.77 A"/>
    <property type="chains" value="A=1-194"/>
</dbReference>
<dbReference type="PDB" id="4QD3">
    <property type="method" value="X-ray"/>
    <property type="resolution" value="1.89 A"/>
    <property type="chains" value="A=1-194"/>
</dbReference>
<dbReference type="PDBsum" id="4DHW"/>
<dbReference type="PDBsum" id="4DJJ"/>
<dbReference type="PDBsum" id="4ERX"/>
<dbReference type="PDBsum" id="4FNO"/>
<dbReference type="PDBsum" id="4FYJ"/>
<dbReference type="PDBsum" id="4JC4"/>
<dbReference type="PDBsum" id="4QAJ"/>
<dbReference type="PDBsum" id="4QBK"/>
<dbReference type="PDBsum" id="4QD3"/>
<dbReference type="SMR" id="Q9HVC3"/>
<dbReference type="FunCoup" id="Q9HVC3">
    <property type="interactions" value="454"/>
</dbReference>
<dbReference type="STRING" id="208964.PA4672"/>
<dbReference type="PaxDb" id="208964-PA4672"/>
<dbReference type="GeneID" id="881396"/>
<dbReference type="KEGG" id="pae:PA4672"/>
<dbReference type="PATRIC" id="fig|208964.12.peg.4894"/>
<dbReference type="PseudoCAP" id="PA4672"/>
<dbReference type="HOGENOM" id="CLU_062456_3_1_6"/>
<dbReference type="InParanoid" id="Q9HVC3"/>
<dbReference type="OrthoDB" id="9800507at2"/>
<dbReference type="PhylomeDB" id="Q9HVC3"/>
<dbReference type="BioCyc" id="PAER208964:G1FZ6-4769-MONOMER"/>
<dbReference type="BRENDA" id="3.1.1.29">
    <property type="organism ID" value="5087"/>
</dbReference>
<dbReference type="EvolutionaryTrace" id="Q9HVC3"/>
<dbReference type="Proteomes" id="UP000002438">
    <property type="component" value="Chromosome"/>
</dbReference>
<dbReference type="GO" id="GO:0005737">
    <property type="term" value="C:cytoplasm"/>
    <property type="evidence" value="ECO:0007669"/>
    <property type="project" value="UniProtKB-SubCell"/>
</dbReference>
<dbReference type="GO" id="GO:0004045">
    <property type="term" value="F:peptidyl-tRNA hydrolase activity"/>
    <property type="evidence" value="ECO:0000318"/>
    <property type="project" value="GO_Central"/>
</dbReference>
<dbReference type="GO" id="GO:0000049">
    <property type="term" value="F:tRNA binding"/>
    <property type="evidence" value="ECO:0007669"/>
    <property type="project" value="UniProtKB-UniRule"/>
</dbReference>
<dbReference type="GO" id="GO:0006515">
    <property type="term" value="P:protein quality control for misfolded or incompletely synthesized proteins"/>
    <property type="evidence" value="ECO:0007669"/>
    <property type="project" value="UniProtKB-UniRule"/>
</dbReference>
<dbReference type="GO" id="GO:0072344">
    <property type="term" value="P:rescue of stalled ribosome"/>
    <property type="evidence" value="ECO:0007669"/>
    <property type="project" value="UniProtKB-UniRule"/>
</dbReference>
<dbReference type="CDD" id="cd00462">
    <property type="entry name" value="PTH"/>
    <property type="match status" value="1"/>
</dbReference>
<dbReference type="FunFam" id="3.40.50.1470:FF:000001">
    <property type="entry name" value="Peptidyl-tRNA hydrolase"/>
    <property type="match status" value="1"/>
</dbReference>
<dbReference type="Gene3D" id="3.40.50.1470">
    <property type="entry name" value="Peptidyl-tRNA hydrolase"/>
    <property type="match status" value="1"/>
</dbReference>
<dbReference type="HAMAP" id="MF_00083">
    <property type="entry name" value="Pept_tRNA_hydro_bact"/>
    <property type="match status" value="1"/>
</dbReference>
<dbReference type="InterPro" id="IPR001328">
    <property type="entry name" value="Pept_tRNA_hydro"/>
</dbReference>
<dbReference type="InterPro" id="IPR018171">
    <property type="entry name" value="Pept_tRNA_hydro_CS"/>
</dbReference>
<dbReference type="InterPro" id="IPR036416">
    <property type="entry name" value="Pept_tRNA_hydro_sf"/>
</dbReference>
<dbReference type="NCBIfam" id="TIGR00447">
    <property type="entry name" value="pth"/>
    <property type="match status" value="1"/>
</dbReference>
<dbReference type="PANTHER" id="PTHR17224">
    <property type="entry name" value="PEPTIDYL-TRNA HYDROLASE"/>
    <property type="match status" value="1"/>
</dbReference>
<dbReference type="PANTHER" id="PTHR17224:SF1">
    <property type="entry name" value="PEPTIDYL-TRNA HYDROLASE"/>
    <property type="match status" value="1"/>
</dbReference>
<dbReference type="Pfam" id="PF01195">
    <property type="entry name" value="Pept_tRNA_hydro"/>
    <property type="match status" value="1"/>
</dbReference>
<dbReference type="SUPFAM" id="SSF53178">
    <property type="entry name" value="Peptidyl-tRNA hydrolase-like"/>
    <property type="match status" value="1"/>
</dbReference>
<dbReference type="PROSITE" id="PS01195">
    <property type="entry name" value="PEPT_TRNA_HYDROL_1"/>
    <property type="match status" value="1"/>
</dbReference>
<dbReference type="PROSITE" id="PS01196">
    <property type="entry name" value="PEPT_TRNA_HYDROL_2"/>
    <property type="match status" value="1"/>
</dbReference>
<gene>
    <name evidence="1" type="primary">pth</name>
    <name type="ordered locus">PA4672</name>
</gene>
<sequence length="194" mass="20804">MTAVQLIVGLGNPGPEYDQTRHNAGALFVERLAHAQGVSLVADRKYFGLVGKFSHQGKDVRLLIPTTYMNRSGQSVAALAGFFRIAPDAILVAHDELDMPPGVAKLKTGGGHGGHNGLRDIIAQLGNQNSFHRLRLGIGHPGHSSLVSGYVLGRAPRSEQELLDTSIDFALGVLPEMLAGDWTRAMQKLHSQKA</sequence>
<proteinExistence type="evidence at protein level"/>
<protein>
    <recommendedName>
        <fullName evidence="1">Peptidyl-tRNA hydrolase</fullName>
        <shortName evidence="1">Pth</shortName>
        <ecNumber evidence="1">3.1.1.29</ecNumber>
    </recommendedName>
</protein>
<feature type="chain" id="PRO_0000187796" description="Peptidyl-tRNA hydrolase">
    <location>
        <begin position="1"/>
        <end position="194"/>
    </location>
</feature>
<feature type="active site" description="Proton acceptor" evidence="1 4">
    <location>
        <position position="22"/>
    </location>
</feature>
<feature type="binding site" evidence="1 4">
    <location>
        <position position="17"/>
    </location>
    <ligand>
        <name>tRNA</name>
        <dbReference type="ChEBI" id="CHEBI:17843"/>
    </ligand>
</feature>
<feature type="binding site" evidence="1 4">
    <location>
        <position position="68"/>
    </location>
    <ligand>
        <name>tRNA</name>
        <dbReference type="ChEBI" id="CHEBI:17843"/>
    </ligand>
</feature>
<feature type="binding site" evidence="1 4">
    <location>
        <position position="70"/>
    </location>
    <ligand>
        <name>tRNA</name>
        <dbReference type="ChEBI" id="CHEBI:17843"/>
    </ligand>
</feature>
<feature type="binding site" evidence="1 4">
    <location>
        <position position="116"/>
    </location>
    <ligand>
        <name>tRNA</name>
        <dbReference type="ChEBI" id="CHEBI:17843"/>
    </ligand>
</feature>
<feature type="site" description="Discriminates between blocked and unblocked aminoacyl-tRNA" evidence="1 4">
    <location>
        <position position="12"/>
    </location>
</feature>
<feature type="site" description="Stabilizes the basic form of H active site to accept a proton" evidence="1">
    <location>
        <position position="95"/>
    </location>
</feature>
<feature type="strand" evidence="10">
    <location>
        <begin position="6"/>
        <end position="9"/>
    </location>
</feature>
<feature type="helix" evidence="10">
    <location>
        <begin position="15"/>
        <end position="17"/>
    </location>
</feature>
<feature type="helix" evidence="10">
    <location>
        <begin position="21"/>
        <end position="23"/>
    </location>
</feature>
<feature type="helix" evidence="10">
    <location>
        <begin position="24"/>
        <end position="35"/>
    </location>
</feature>
<feature type="strand" evidence="10">
    <location>
        <begin position="41"/>
        <end position="43"/>
    </location>
</feature>
<feature type="helix" evidence="10">
    <location>
        <begin position="44"/>
        <end position="46"/>
    </location>
</feature>
<feature type="strand" evidence="10">
    <location>
        <begin position="48"/>
        <end position="55"/>
    </location>
</feature>
<feature type="strand" evidence="10">
    <location>
        <begin position="58"/>
        <end position="65"/>
    </location>
</feature>
<feature type="helix" evidence="10">
    <location>
        <begin position="69"/>
        <end position="71"/>
    </location>
</feature>
<feature type="helix" evidence="10">
    <location>
        <begin position="72"/>
        <end position="83"/>
    </location>
</feature>
<feature type="helix" evidence="10">
    <location>
        <begin position="87"/>
        <end position="89"/>
    </location>
</feature>
<feature type="strand" evidence="10">
    <location>
        <begin position="90"/>
        <end position="96"/>
    </location>
</feature>
<feature type="strand" evidence="10">
    <location>
        <begin position="104"/>
        <end position="109"/>
    </location>
</feature>
<feature type="helix" evidence="10">
    <location>
        <begin position="116"/>
        <end position="124"/>
    </location>
</feature>
<feature type="strand" evidence="9">
    <location>
        <begin position="127"/>
        <end position="129"/>
    </location>
</feature>
<feature type="strand" evidence="10">
    <location>
        <begin position="131"/>
        <end position="137"/>
    </location>
</feature>
<feature type="helix" evidence="10">
    <location>
        <begin position="144"/>
        <end position="146"/>
    </location>
</feature>
<feature type="helix" evidence="10">
    <location>
        <begin position="147"/>
        <end position="151"/>
    </location>
</feature>
<feature type="helix" evidence="10">
    <location>
        <begin position="157"/>
        <end position="172"/>
    </location>
</feature>
<feature type="helix" evidence="10">
    <location>
        <begin position="174"/>
        <end position="179"/>
    </location>
</feature>
<feature type="helix" evidence="10">
    <location>
        <begin position="182"/>
        <end position="190"/>
    </location>
</feature>